<dbReference type="EMBL" id="CP000301">
    <property type="protein sequence ID" value="ABD88214.1"/>
    <property type="molecule type" value="Genomic_DNA"/>
</dbReference>
<dbReference type="SMR" id="Q214H2"/>
<dbReference type="STRING" id="316056.RPC_2664"/>
<dbReference type="KEGG" id="rpc:RPC_2664"/>
<dbReference type="eggNOG" id="COG0781">
    <property type="taxonomic scope" value="Bacteria"/>
</dbReference>
<dbReference type="HOGENOM" id="CLU_087843_4_0_5"/>
<dbReference type="GO" id="GO:0005829">
    <property type="term" value="C:cytosol"/>
    <property type="evidence" value="ECO:0007669"/>
    <property type="project" value="TreeGrafter"/>
</dbReference>
<dbReference type="GO" id="GO:0003723">
    <property type="term" value="F:RNA binding"/>
    <property type="evidence" value="ECO:0007669"/>
    <property type="project" value="UniProtKB-UniRule"/>
</dbReference>
<dbReference type="GO" id="GO:0006353">
    <property type="term" value="P:DNA-templated transcription termination"/>
    <property type="evidence" value="ECO:0007669"/>
    <property type="project" value="UniProtKB-UniRule"/>
</dbReference>
<dbReference type="GO" id="GO:0031564">
    <property type="term" value="P:transcription antitermination"/>
    <property type="evidence" value="ECO:0007669"/>
    <property type="project" value="UniProtKB-KW"/>
</dbReference>
<dbReference type="Gene3D" id="1.10.940.10">
    <property type="entry name" value="NusB-like"/>
    <property type="match status" value="1"/>
</dbReference>
<dbReference type="HAMAP" id="MF_00073">
    <property type="entry name" value="NusB"/>
    <property type="match status" value="1"/>
</dbReference>
<dbReference type="InterPro" id="IPR035926">
    <property type="entry name" value="NusB-like_sf"/>
</dbReference>
<dbReference type="InterPro" id="IPR011605">
    <property type="entry name" value="NusB_fam"/>
</dbReference>
<dbReference type="InterPro" id="IPR006027">
    <property type="entry name" value="NusB_RsmB_TIM44"/>
</dbReference>
<dbReference type="NCBIfam" id="TIGR01951">
    <property type="entry name" value="nusB"/>
    <property type="match status" value="1"/>
</dbReference>
<dbReference type="PANTHER" id="PTHR11078:SF3">
    <property type="entry name" value="ANTITERMINATION NUSB DOMAIN-CONTAINING PROTEIN"/>
    <property type="match status" value="1"/>
</dbReference>
<dbReference type="PANTHER" id="PTHR11078">
    <property type="entry name" value="N UTILIZATION SUBSTANCE PROTEIN B-RELATED"/>
    <property type="match status" value="1"/>
</dbReference>
<dbReference type="Pfam" id="PF01029">
    <property type="entry name" value="NusB"/>
    <property type="match status" value="1"/>
</dbReference>
<dbReference type="SUPFAM" id="SSF48013">
    <property type="entry name" value="NusB-like"/>
    <property type="match status" value="1"/>
</dbReference>
<gene>
    <name evidence="1" type="primary">nusB</name>
    <name type="ordered locus">RPC_2664</name>
</gene>
<feature type="chain" id="PRO_0000265576" description="Transcription antitermination protein NusB">
    <location>
        <begin position="1"/>
        <end position="169"/>
    </location>
</feature>
<feature type="region of interest" description="Disordered" evidence="2">
    <location>
        <begin position="1"/>
        <end position="22"/>
    </location>
</feature>
<feature type="compositionally biased region" description="Basic and acidic residues" evidence="2">
    <location>
        <begin position="1"/>
        <end position="19"/>
    </location>
</feature>
<organism>
    <name type="scientific">Rhodopseudomonas palustris (strain BisB18)</name>
    <dbReference type="NCBI Taxonomy" id="316056"/>
    <lineage>
        <taxon>Bacteria</taxon>
        <taxon>Pseudomonadati</taxon>
        <taxon>Pseudomonadota</taxon>
        <taxon>Alphaproteobacteria</taxon>
        <taxon>Hyphomicrobiales</taxon>
        <taxon>Nitrobacteraceae</taxon>
        <taxon>Rhodopseudomonas</taxon>
    </lineage>
</organism>
<proteinExistence type="inferred from homology"/>
<keyword id="KW-0694">RNA-binding</keyword>
<keyword id="KW-0804">Transcription</keyword>
<keyword id="KW-0889">Transcription antitermination</keyword>
<keyword id="KW-0805">Transcription regulation</keyword>
<name>NUSB_RHOPB</name>
<protein>
    <recommendedName>
        <fullName evidence="1">Transcription antitermination protein NusB</fullName>
    </recommendedName>
    <alternativeName>
        <fullName evidence="1">Antitermination factor NusB</fullName>
    </alternativeName>
</protein>
<sequence length="169" mass="18589">MAEMKKTIDNKPAPKGEKKANRRGAARLAAVQALYQMDVGGAGLNDIFAEFESHWLGNEVEGDQYLPAEQAFFQDVVSGVVRDQAKLDPLIDVALAKGWPLARIDAILRAVMRAGAYELEHRKDVPARVVVSEYVDVANAFVEGEETGMVNAVLDQIARQFRADEFSRG</sequence>
<reference key="1">
    <citation type="submission" date="2006-03" db="EMBL/GenBank/DDBJ databases">
        <title>Complete sequence of Rhodopseudomonas palustris BisB18.</title>
        <authorList>
            <consortium name="US DOE Joint Genome Institute"/>
            <person name="Copeland A."/>
            <person name="Lucas S."/>
            <person name="Lapidus A."/>
            <person name="Barry K."/>
            <person name="Detter J.C."/>
            <person name="Glavina del Rio T."/>
            <person name="Hammon N."/>
            <person name="Israni S."/>
            <person name="Dalin E."/>
            <person name="Tice H."/>
            <person name="Pitluck S."/>
            <person name="Chain P."/>
            <person name="Malfatti S."/>
            <person name="Shin M."/>
            <person name="Vergez L."/>
            <person name="Schmutz J."/>
            <person name="Larimer F."/>
            <person name="Land M."/>
            <person name="Hauser L."/>
            <person name="Pelletier D.A."/>
            <person name="Kyrpides N."/>
            <person name="Anderson I."/>
            <person name="Oda Y."/>
            <person name="Harwood C.S."/>
            <person name="Richardson P."/>
        </authorList>
    </citation>
    <scope>NUCLEOTIDE SEQUENCE [LARGE SCALE GENOMIC DNA]</scope>
    <source>
        <strain>BisB18</strain>
    </source>
</reference>
<accession>Q214H2</accession>
<comment type="function">
    <text evidence="1">Involved in transcription antitermination. Required for transcription of ribosomal RNA (rRNA) genes. Binds specifically to the boxA antiterminator sequence of the ribosomal RNA (rrn) operons.</text>
</comment>
<comment type="similarity">
    <text evidence="1">Belongs to the NusB family.</text>
</comment>
<evidence type="ECO:0000255" key="1">
    <source>
        <dbReference type="HAMAP-Rule" id="MF_00073"/>
    </source>
</evidence>
<evidence type="ECO:0000256" key="2">
    <source>
        <dbReference type="SAM" id="MobiDB-lite"/>
    </source>
</evidence>